<name>Y5792_DICDI</name>
<gene>
    <name type="ORF">DDB_G0284827</name>
</gene>
<reference key="1">
    <citation type="journal article" date="2005" name="Nature">
        <title>The genome of the social amoeba Dictyostelium discoideum.</title>
        <authorList>
            <person name="Eichinger L."/>
            <person name="Pachebat J.A."/>
            <person name="Gloeckner G."/>
            <person name="Rajandream M.A."/>
            <person name="Sucgang R."/>
            <person name="Berriman M."/>
            <person name="Song J."/>
            <person name="Olsen R."/>
            <person name="Szafranski K."/>
            <person name="Xu Q."/>
            <person name="Tunggal B."/>
            <person name="Kummerfeld S."/>
            <person name="Madera M."/>
            <person name="Konfortov B.A."/>
            <person name="Rivero F."/>
            <person name="Bankier A.T."/>
            <person name="Lehmann R."/>
            <person name="Hamlin N."/>
            <person name="Davies R."/>
            <person name="Gaudet P."/>
            <person name="Fey P."/>
            <person name="Pilcher K."/>
            <person name="Chen G."/>
            <person name="Saunders D."/>
            <person name="Sodergren E.J."/>
            <person name="Davis P."/>
            <person name="Kerhornou A."/>
            <person name="Nie X."/>
            <person name="Hall N."/>
            <person name="Anjard C."/>
            <person name="Hemphill L."/>
            <person name="Bason N."/>
            <person name="Farbrother P."/>
            <person name="Desany B."/>
            <person name="Just E."/>
            <person name="Morio T."/>
            <person name="Rost R."/>
            <person name="Churcher C.M."/>
            <person name="Cooper J."/>
            <person name="Haydock S."/>
            <person name="van Driessche N."/>
            <person name="Cronin A."/>
            <person name="Goodhead I."/>
            <person name="Muzny D.M."/>
            <person name="Mourier T."/>
            <person name="Pain A."/>
            <person name="Lu M."/>
            <person name="Harper D."/>
            <person name="Lindsay R."/>
            <person name="Hauser H."/>
            <person name="James K.D."/>
            <person name="Quiles M."/>
            <person name="Madan Babu M."/>
            <person name="Saito T."/>
            <person name="Buchrieser C."/>
            <person name="Wardroper A."/>
            <person name="Felder M."/>
            <person name="Thangavelu M."/>
            <person name="Johnson D."/>
            <person name="Knights A."/>
            <person name="Loulseged H."/>
            <person name="Mungall K.L."/>
            <person name="Oliver K."/>
            <person name="Price C."/>
            <person name="Quail M.A."/>
            <person name="Urushihara H."/>
            <person name="Hernandez J."/>
            <person name="Rabbinowitsch E."/>
            <person name="Steffen D."/>
            <person name="Sanders M."/>
            <person name="Ma J."/>
            <person name="Kohara Y."/>
            <person name="Sharp S."/>
            <person name="Simmonds M.N."/>
            <person name="Spiegler S."/>
            <person name="Tivey A."/>
            <person name="Sugano S."/>
            <person name="White B."/>
            <person name="Walker D."/>
            <person name="Woodward J.R."/>
            <person name="Winckler T."/>
            <person name="Tanaka Y."/>
            <person name="Shaulsky G."/>
            <person name="Schleicher M."/>
            <person name="Weinstock G.M."/>
            <person name="Rosenthal A."/>
            <person name="Cox E.C."/>
            <person name="Chisholm R.L."/>
            <person name="Gibbs R.A."/>
            <person name="Loomis W.F."/>
            <person name="Platzer M."/>
            <person name="Kay R.R."/>
            <person name="Williams J.G."/>
            <person name="Dear P.H."/>
            <person name="Noegel A.A."/>
            <person name="Barrell B.G."/>
            <person name="Kuspa A."/>
        </authorList>
    </citation>
    <scope>NUCLEOTIDE SEQUENCE [LARGE SCALE GENOMIC DNA]</scope>
    <source>
        <strain>AX4</strain>
    </source>
</reference>
<proteinExistence type="predicted"/>
<sequence length="61" mass="7432">MTEKDSFKKRILFFFFIFFTLFLFNIPKKKKKKIKKNKTTSKSNSNVYGEKKIFKKKKSDI</sequence>
<organism>
    <name type="scientific">Dictyostelium discoideum</name>
    <name type="common">Social amoeba</name>
    <dbReference type="NCBI Taxonomy" id="44689"/>
    <lineage>
        <taxon>Eukaryota</taxon>
        <taxon>Amoebozoa</taxon>
        <taxon>Evosea</taxon>
        <taxon>Eumycetozoa</taxon>
        <taxon>Dictyostelia</taxon>
        <taxon>Dictyosteliales</taxon>
        <taxon>Dictyosteliaceae</taxon>
        <taxon>Dictyostelium</taxon>
    </lineage>
</organism>
<accession>Q54P45</accession>
<protein>
    <recommendedName>
        <fullName>Putative uncharacterized transmembrane protein DDB_G0284827</fullName>
    </recommendedName>
</protein>
<dbReference type="EMBL" id="AAFI02000071">
    <property type="protein sequence ID" value="EAL65066.1"/>
    <property type="molecule type" value="Genomic_DNA"/>
</dbReference>
<dbReference type="RefSeq" id="XP_638413.1">
    <property type="nucleotide sequence ID" value="XM_633321.1"/>
</dbReference>
<dbReference type="SMR" id="Q54P45"/>
<dbReference type="PaxDb" id="44689-DDB0215792"/>
<dbReference type="EnsemblProtists" id="EAL65066">
    <property type="protein sequence ID" value="EAL65066"/>
    <property type="gene ID" value="DDB_G0284827"/>
</dbReference>
<dbReference type="GeneID" id="8624783"/>
<dbReference type="KEGG" id="ddi:DDB_G0284827"/>
<dbReference type="HOGENOM" id="CLU_2927425_0_0_1"/>
<dbReference type="InParanoid" id="Q54P45"/>
<dbReference type="PRO" id="PR:Q54P45"/>
<dbReference type="Proteomes" id="UP000002195">
    <property type="component" value="Chromosome 4"/>
</dbReference>
<dbReference type="GO" id="GO:0016020">
    <property type="term" value="C:membrane"/>
    <property type="evidence" value="ECO:0007669"/>
    <property type="project" value="UniProtKB-SubCell"/>
</dbReference>
<evidence type="ECO:0000255" key="1"/>
<evidence type="ECO:0000305" key="2"/>
<keyword id="KW-0472">Membrane</keyword>
<keyword id="KW-1185">Reference proteome</keyword>
<keyword id="KW-0812">Transmembrane</keyword>
<keyword id="KW-1133">Transmembrane helix</keyword>
<comment type="subcellular location">
    <subcellularLocation>
        <location evidence="2">Membrane</location>
        <topology evidence="2">Single-pass membrane protein</topology>
    </subcellularLocation>
</comment>
<feature type="chain" id="PRO_0000350777" description="Putative uncharacterized transmembrane protein DDB_G0284827">
    <location>
        <begin position="1"/>
        <end position="61"/>
    </location>
</feature>
<feature type="transmembrane region" description="Helical" evidence="1">
    <location>
        <begin position="10"/>
        <end position="27"/>
    </location>
</feature>